<evidence type="ECO:0000255" key="1">
    <source>
        <dbReference type="HAMAP-Rule" id="MF_01058"/>
    </source>
</evidence>
<evidence type="ECO:0000256" key="2">
    <source>
        <dbReference type="SAM" id="MobiDB-lite"/>
    </source>
</evidence>
<evidence type="ECO:0000305" key="3"/>
<comment type="function">
    <text evidence="1">A GTPase-activating protein (GAP) that modifies Der/EngA GTPase function. May play a role in ribosome biogenesis.</text>
</comment>
<comment type="subunit">
    <text evidence="1">Interacts with Der.</text>
</comment>
<comment type="similarity">
    <text evidence="1">Belongs to the YihI family.</text>
</comment>
<comment type="sequence caution" evidence="3">
    <conflict type="erroneous initiation">
        <sequence resource="EMBL-CDS" id="ABK39574"/>
    </conflict>
    <text>Extended N-terminus.</text>
</comment>
<gene>
    <name evidence="1" type="primary">yihI</name>
    <name type="ordered locus">AHA_0270</name>
</gene>
<name>YIHI_AERHH</name>
<sequence>MSAKQPNRKPAGKRKESDASAQEGRERKRAAKRKGLKAGSRQQVEQAGKKSGTKQAKDPRIGSRKPVALIVEEKSSKPVAPKQIKEKKLVMTPEQELASIENDDRLNDLLDRLDAGETLEATEQAWVDQRVDRYQELMDELGIIDTDDDEDEADFDEADFDEPGQPASEEELWDRFTQVDYQPEPKPEPKKK</sequence>
<proteinExistence type="inferred from homology"/>
<dbReference type="EMBL" id="CP000462">
    <property type="protein sequence ID" value="ABK39574.1"/>
    <property type="status" value="ALT_INIT"/>
    <property type="molecule type" value="Genomic_DNA"/>
</dbReference>
<dbReference type="RefSeq" id="WP_041217267.1">
    <property type="nucleotide sequence ID" value="NC_008570.1"/>
</dbReference>
<dbReference type="RefSeq" id="YP_854798.1">
    <property type="nucleotide sequence ID" value="NC_008570.1"/>
</dbReference>
<dbReference type="SMR" id="A0KEY2"/>
<dbReference type="STRING" id="380703.AHA_0270"/>
<dbReference type="EnsemblBacteria" id="ABK39574">
    <property type="protein sequence ID" value="ABK39574"/>
    <property type="gene ID" value="AHA_0270"/>
</dbReference>
<dbReference type="GeneID" id="4490201"/>
<dbReference type="KEGG" id="aha:AHA_0270"/>
<dbReference type="PATRIC" id="fig|380703.7.peg.257"/>
<dbReference type="eggNOG" id="COG3078">
    <property type="taxonomic scope" value="Bacteria"/>
</dbReference>
<dbReference type="HOGENOM" id="CLU_094104_0_0_6"/>
<dbReference type="OrthoDB" id="5677577at2"/>
<dbReference type="Proteomes" id="UP000000756">
    <property type="component" value="Chromosome"/>
</dbReference>
<dbReference type="GO" id="GO:0005096">
    <property type="term" value="F:GTPase activator activity"/>
    <property type="evidence" value="ECO:0007669"/>
    <property type="project" value="UniProtKB-KW"/>
</dbReference>
<dbReference type="GO" id="GO:0042254">
    <property type="term" value="P:ribosome biogenesis"/>
    <property type="evidence" value="ECO:0007669"/>
    <property type="project" value="UniProtKB-KW"/>
</dbReference>
<dbReference type="HAMAP" id="MF_01058">
    <property type="entry name" value="GAP_YihI"/>
    <property type="match status" value="1"/>
</dbReference>
<dbReference type="InterPro" id="IPR007336">
    <property type="entry name" value="YihI"/>
</dbReference>
<dbReference type="NCBIfam" id="NF003560">
    <property type="entry name" value="PRK05244.1-1"/>
    <property type="match status" value="1"/>
</dbReference>
<dbReference type="Pfam" id="PF04220">
    <property type="entry name" value="YihI"/>
    <property type="match status" value="1"/>
</dbReference>
<organism>
    <name type="scientific">Aeromonas hydrophila subsp. hydrophila (strain ATCC 7966 / DSM 30187 / BCRC 13018 / CCUG 14551 / JCM 1027 / KCTC 2358 / NCIMB 9240 / NCTC 8049)</name>
    <dbReference type="NCBI Taxonomy" id="380703"/>
    <lineage>
        <taxon>Bacteria</taxon>
        <taxon>Pseudomonadati</taxon>
        <taxon>Pseudomonadota</taxon>
        <taxon>Gammaproteobacteria</taxon>
        <taxon>Aeromonadales</taxon>
        <taxon>Aeromonadaceae</taxon>
        <taxon>Aeromonas</taxon>
    </lineage>
</organism>
<keyword id="KW-0343">GTPase activation</keyword>
<keyword id="KW-1185">Reference proteome</keyword>
<keyword id="KW-0690">Ribosome biogenesis</keyword>
<feature type="chain" id="PRO_0000402180" description="Der GTPase-activating protein YihI">
    <location>
        <begin position="1"/>
        <end position="192"/>
    </location>
</feature>
<feature type="region of interest" description="Disordered" evidence="2">
    <location>
        <begin position="1"/>
        <end position="87"/>
    </location>
</feature>
<feature type="region of interest" description="Disordered" evidence="2">
    <location>
        <begin position="145"/>
        <end position="192"/>
    </location>
</feature>
<feature type="compositionally biased region" description="Basic residues" evidence="2">
    <location>
        <begin position="1"/>
        <end position="12"/>
    </location>
</feature>
<feature type="compositionally biased region" description="Basic and acidic residues" evidence="2">
    <location>
        <begin position="13"/>
        <end position="26"/>
    </location>
</feature>
<feature type="compositionally biased region" description="Basic residues" evidence="2">
    <location>
        <begin position="27"/>
        <end position="36"/>
    </location>
</feature>
<feature type="compositionally biased region" description="Acidic residues" evidence="2">
    <location>
        <begin position="145"/>
        <end position="172"/>
    </location>
</feature>
<feature type="compositionally biased region" description="Basic and acidic residues" evidence="2">
    <location>
        <begin position="183"/>
        <end position="192"/>
    </location>
</feature>
<accession>A0KEY2</accession>
<reference key="1">
    <citation type="journal article" date="2006" name="J. Bacteriol.">
        <title>Genome sequence of Aeromonas hydrophila ATCC 7966T: jack of all trades.</title>
        <authorList>
            <person name="Seshadri R."/>
            <person name="Joseph S.W."/>
            <person name="Chopra A.K."/>
            <person name="Sha J."/>
            <person name="Shaw J."/>
            <person name="Graf J."/>
            <person name="Haft D.H."/>
            <person name="Wu M."/>
            <person name="Ren Q."/>
            <person name="Rosovitz M.J."/>
            <person name="Madupu R."/>
            <person name="Tallon L."/>
            <person name="Kim M."/>
            <person name="Jin S."/>
            <person name="Vuong H."/>
            <person name="Stine O.C."/>
            <person name="Ali A."/>
            <person name="Horneman A.J."/>
            <person name="Heidelberg J.F."/>
        </authorList>
    </citation>
    <scope>NUCLEOTIDE SEQUENCE [LARGE SCALE GENOMIC DNA]</scope>
    <source>
        <strain>ATCC 7966 / DSM 30187 / BCRC 13018 / CCUG 14551 / JCM 1027 / KCTC 2358 / NCIMB 9240 / NCTC 8049</strain>
    </source>
</reference>
<protein>
    <recommendedName>
        <fullName evidence="1">Der GTPase-activating protein YihI</fullName>
    </recommendedName>
</protein>